<name>MYO1B_HUMAN</name>
<evidence type="ECO:0000250" key="1"/>
<evidence type="ECO:0000255" key="2">
    <source>
        <dbReference type="PROSITE-ProRule" id="PRU00116"/>
    </source>
</evidence>
<evidence type="ECO:0000255" key="3">
    <source>
        <dbReference type="PROSITE-ProRule" id="PRU00782"/>
    </source>
</evidence>
<evidence type="ECO:0000255" key="4">
    <source>
        <dbReference type="PROSITE-ProRule" id="PRU01093"/>
    </source>
</evidence>
<evidence type="ECO:0000269" key="5">
    <source>
    </source>
</evidence>
<evidence type="ECO:0000269" key="6">
    <source ref="2"/>
</evidence>
<evidence type="ECO:0000303" key="7">
    <source ref="2"/>
</evidence>
<evidence type="ECO:0000305" key="8"/>
<evidence type="ECO:0007744" key="9">
    <source>
    </source>
</evidence>
<evidence type="ECO:0007744" key="10">
    <source>
    </source>
</evidence>
<evidence type="ECO:0007744" key="11">
    <source>
    </source>
</evidence>
<evidence type="ECO:0007744" key="12">
    <source>
    </source>
</evidence>
<evidence type="ECO:0007744" key="13">
    <source>
    </source>
</evidence>
<gene>
    <name type="primary">MYO1B</name>
</gene>
<accession>O43795</accession>
<accession>O43794</accession>
<accession>Q7Z6L5</accession>
<protein>
    <recommendedName>
        <fullName>Unconventional myosin-Ib</fullName>
    </recommendedName>
    <alternativeName>
        <fullName>MYH-1c</fullName>
    </alternativeName>
    <alternativeName>
        <fullName>Myosin I alpha</fullName>
        <shortName>MMI-alpha</shortName>
        <shortName>MMIa</shortName>
    </alternativeName>
</protein>
<keyword id="KW-0009">Actin-binding</keyword>
<keyword id="KW-0025">Alternative splicing</keyword>
<keyword id="KW-0067">ATP-binding</keyword>
<keyword id="KW-0112">Calmodulin-binding</keyword>
<keyword id="KW-1017">Isopeptide bond</keyword>
<keyword id="KW-0505">Motor protein</keyword>
<keyword id="KW-0518">Myosin</keyword>
<keyword id="KW-0547">Nucleotide-binding</keyword>
<keyword id="KW-0597">Phosphoprotein</keyword>
<keyword id="KW-1267">Proteomics identification</keyword>
<keyword id="KW-1185">Reference proteome</keyword>
<keyword id="KW-0677">Repeat</keyword>
<keyword id="KW-0832">Ubl conjugation</keyword>
<comment type="function">
    <text evidence="1">Motor protein that may participate in process critical to neuronal development and function such as cell migration, neurite outgrowth and vesicular transport.</text>
</comment>
<comment type="interaction">
    <interactant intactId="EBI-351119">
        <id>O43795</id>
    </interactant>
    <interactant intactId="EBI-1389308">
        <id>Q7Z3K3</id>
        <label>POGZ</label>
    </interactant>
    <organismsDiffer>false</organismsDiffer>
    <experiments>3</experiments>
</comment>
<comment type="interaction">
    <interactant intactId="EBI-351119">
        <id>O43795</id>
    </interactant>
    <interactant intactId="EBI-3921347">
        <id>P51687</id>
        <label>SUOX</label>
    </interactant>
    <organismsDiffer>false</organismsDiffer>
    <experiments>3</experiments>
</comment>
<comment type="alternative products">
    <event type="alternative splicing"/>
    <isoform>
        <id>O43795-1</id>
        <name>1</name>
        <sequence type="displayed"/>
    </isoform>
    <isoform>
        <id>O43795-2</id>
        <name>2</name>
        <sequence type="described" ref="VSP_012759"/>
    </isoform>
</comment>
<comment type="similarity">
    <text evidence="8">Belongs to the TRAFAC class myosin-kinesin ATPase superfamily. Myosin family.</text>
</comment>
<comment type="caution">
    <text evidence="8">Represents an unconventional myosin. This protein should not be confused with the conventional myosin-1 (MYH1).</text>
</comment>
<dbReference type="EMBL" id="BC053558">
    <property type="protein sequence ID" value="AAH53558.1"/>
    <property type="molecule type" value="mRNA"/>
</dbReference>
<dbReference type="EMBL" id="AJ001381">
    <property type="protein sequence ID" value="CAA04712.1"/>
    <property type="molecule type" value="mRNA"/>
</dbReference>
<dbReference type="EMBL" id="AJ001382">
    <property type="protein sequence ID" value="CAA04713.1"/>
    <property type="molecule type" value="mRNA"/>
</dbReference>
<dbReference type="CCDS" id="CCDS2311.1">
    <molecule id="O43795-2"/>
</dbReference>
<dbReference type="CCDS" id="CCDS46477.1">
    <molecule id="O43795-1"/>
</dbReference>
<dbReference type="RefSeq" id="NP_001123630.1">
    <molecule id="O43795-1"/>
    <property type="nucleotide sequence ID" value="NM_001130158.3"/>
</dbReference>
<dbReference type="RefSeq" id="NP_001155291.1">
    <molecule id="O43795-1"/>
    <property type="nucleotide sequence ID" value="NM_001161819.3"/>
</dbReference>
<dbReference type="RefSeq" id="NP_036355.2">
    <molecule id="O43795-2"/>
    <property type="nucleotide sequence ID" value="NM_012223.4"/>
</dbReference>
<dbReference type="RefSeq" id="XP_005246629.1">
    <molecule id="O43795-1"/>
    <property type="nucleotide sequence ID" value="XM_005246572.2"/>
</dbReference>
<dbReference type="RefSeq" id="XP_054198110.1">
    <molecule id="O43795-1"/>
    <property type="nucleotide sequence ID" value="XM_054342135.1"/>
</dbReference>
<dbReference type="SMR" id="O43795"/>
<dbReference type="BioGRID" id="110567">
    <property type="interactions" value="312"/>
</dbReference>
<dbReference type="FunCoup" id="O43795">
    <property type="interactions" value="1348"/>
</dbReference>
<dbReference type="IntAct" id="O43795">
    <property type="interactions" value="152"/>
</dbReference>
<dbReference type="MINT" id="O43795"/>
<dbReference type="STRING" id="9606.ENSP00000376132"/>
<dbReference type="GlyGen" id="O43795">
    <property type="glycosylation" value="1 site, 1 O-linked glycan (1 site)"/>
</dbReference>
<dbReference type="iPTMnet" id="O43795"/>
<dbReference type="MetOSite" id="O43795"/>
<dbReference type="PhosphoSitePlus" id="O43795"/>
<dbReference type="SwissPalm" id="O43795"/>
<dbReference type="BioMuta" id="MYO1B"/>
<dbReference type="jPOST" id="O43795"/>
<dbReference type="MassIVE" id="O43795"/>
<dbReference type="PaxDb" id="9606-ENSP00000376132"/>
<dbReference type="PeptideAtlas" id="O43795"/>
<dbReference type="ProteomicsDB" id="49172">
    <molecule id="O43795-1"/>
</dbReference>
<dbReference type="ProteomicsDB" id="49173">
    <molecule id="O43795-2"/>
</dbReference>
<dbReference type="Pumba" id="O43795"/>
<dbReference type="Antibodypedia" id="2858">
    <property type="antibodies" value="125 antibodies from 31 providers"/>
</dbReference>
<dbReference type="DNASU" id="4430"/>
<dbReference type="Ensembl" id="ENST00000304164.8">
    <molecule id="O43795-1"/>
    <property type="protein sequence ID" value="ENSP00000306382.4"/>
    <property type="gene ID" value="ENSG00000128641.19"/>
</dbReference>
<dbReference type="Ensembl" id="ENST00000339514.8">
    <molecule id="O43795-2"/>
    <property type="protein sequence ID" value="ENSP00000341903.4"/>
    <property type="gene ID" value="ENSG00000128641.19"/>
</dbReference>
<dbReference type="Ensembl" id="ENST00000392318.8">
    <molecule id="O43795-1"/>
    <property type="protein sequence ID" value="ENSP00000376132.3"/>
    <property type="gene ID" value="ENSG00000128641.19"/>
</dbReference>
<dbReference type="GeneID" id="4430"/>
<dbReference type="KEGG" id="hsa:4430"/>
<dbReference type="MANE-Select" id="ENST00000392318.8">
    <property type="protein sequence ID" value="ENSP00000376132.3"/>
    <property type="RefSeq nucleotide sequence ID" value="NM_001130158.3"/>
    <property type="RefSeq protein sequence ID" value="NP_001123630.1"/>
</dbReference>
<dbReference type="UCSC" id="uc002usq.3">
    <molecule id="O43795-1"/>
    <property type="organism name" value="human"/>
</dbReference>
<dbReference type="AGR" id="HGNC:7596"/>
<dbReference type="CTD" id="4430"/>
<dbReference type="DisGeNET" id="4430"/>
<dbReference type="GeneCards" id="MYO1B"/>
<dbReference type="HGNC" id="HGNC:7596">
    <property type="gene designation" value="MYO1B"/>
</dbReference>
<dbReference type="HPA" id="ENSG00000128641">
    <property type="expression patterns" value="Tissue enhanced (liver)"/>
</dbReference>
<dbReference type="MalaCards" id="MYO1B"/>
<dbReference type="MIM" id="606537">
    <property type="type" value="gene"/>
</dbReference>
<dbReference type="neXtProt" id="NX_O43795"/>
<dbReference type="OpenTargets" id="ENSG00000128641"/>
<dbReference type="PharmGKB" id="PA31398"/>
<dbReference type="VEuPathDB" id="HostDB:ENSG00000128641"/>
<dbReference type="eggNOG" id="KOG0164">
    <property type="taxonomic scope" value="Eukaryota"/>
</dbReference>
<dbReference type="GeneTree" id="ENSGT00940000155752"/>
<dbReference type="HOGENOM" id="CLU_000192_7_7_1"/>
<dbReference type="InParanoid" id="O43795"/>
<dbReference type="OMA" id="NARKMYS"/>
<dbReference type="OrthoDB" id="6108017at2759"/>
<dbReference type="PAN-GO" id="O43795">
    <property type="GO annotations" value="10 GO annotations based on evolutionary models"/>
</dbReference>
<dbReference type="PhylomeDB" id="O43795"/>
<dbReference type="TreeFam" id="TF312960"/>
<dbReference type="PathwayCommons" id="O43795"/>
<dbReference type="SignaLink" id="O43795"/>
<dbReference type="BioGRID-ORCS" id="4430">
    <property type="hits" value="13 hits in 1151 CRISPR screens"/>
</dbReference>
<dbReference type="CD-CODE" id="FB4E32DD">
    <property type="entry name" value="Presynaptic clusters and postsynaptic densities"/>
</dbReference>
<dbReference type="ChiTaRS" id="MYO1B">
    <property type="organism name" value="human"/>
</dbReference>
<dbReference type="GeneWiki" id="MYO1B"/>
<dbReference type="GenomeRNAi" id="4430"/>
<dbReference type="Pharos" id="O43795">
    <property type="development level" value="Tbio"/>
</dbReference>
<dbReference type="PRO" id="PR:O43795"/>
<dbReference type="Proteomes" id="UP000005640">
    <property type="component" value="Chromosome 2"/>
</dbReference>
<dbReference type="RNAct" id="O43795">
    <property type="molecule type" value="protein"/>
</dbReference>
<dbReference type="Bgee" id="ENSG00000128641">
    <property type="expression patterns" value="Expressed in endometrium epithelium and 207 other cell types or tissues"/>
</dbReference>
<dbReference type="ExpressionAtlas" id="O43795">
    <property type="expression patterns" value="baseline and differential"/>
</dbReference>
<dbReference type="GO" id="GO:0015629">
    <property type="term" value="C:actin cytoskeleton"/>
    <property type="evidence" value="ECO:0000318"/>
    <property type="project" value="GO_Central"/>
</dbReference>
<dbReference type="GO" id="GO:0005884">
    <property type="term" value="C:actin filament"/>
    <property type="evidence" value="ECO:0000314"/>
    <property type="project" value="UniProtKB"/>
</dbReference>
<dbReference type="GO" id="GO:0005903">
    <property type="term" value="C:brush border"/>
    <property type="evidence" value="ECO:0000250"/>
    <property type="project" value="UniProtKB"/>
</dbReference>
<dbReference type="GO" id="GO:0071944">
    <property type="term" value="C:cell periphery"/>
    <property type="evidence" value="ECO:0000250"/>
    <property type="project" value="UniProtKB"/>
</dbReference>
<dbReference type="GO" id="GO:0005737">
    <property type="term" value="C:cytoplasm"/>
    <property type="evidence" value="ECO:0000250"/>
    <property type="project" value="UniProtKB"/>
</dbReference>
<dbReference type="GO" id="GO:0005769">
    <property type="term" value="C:early endosome"/>
    <property type="evidence" value="ECO:0000314"/>
    <property type="project" value="UniProtKB"/>
</dbReference>
<dbReference type="GO" id="GO:0010008">
    <property type="term" value="C:endosome membrane"/>
    <property type="evidence" value="ECO:0000314"/>
    <property type="project" value="UniProtKB"/>
</dbReference>
<dbReference type="GO" id="GO:0070062">
    <property type="term" value="C:extracellular exosome"/>
    <property type="evidence" value="ECO:0007005"/>
    <property type="project" value="UniProtKB"/>
</dbReference>
<dbReference type="GO" id="GO:0030175">
    <property type="term" value="C:filopodium"/>
    <property type="evidence" value="ECO:0000250"/>
    <property type="project" value="UniProtKB"/>
</dbReference>
<dbReference type="GO" id="GO:0005902">
    <property type="term" value="C:microvillus"/>
    <property type="evidence" value="ECO:0000318"/>
    <property type="project" value="GO_Central"/>
</dbReference>
<dbReference type="GO" id="GO:0016459">
    <property type="term" value="C:myosin complex"/>
    <property type="evidence" value="ECO:0007669"/>
    <property type="project" value="UniProtKB-KW"/>
</dbReference>
<dbReference type="GO" id="GO:0048471">
    <property type="term" value="C:perinuclear region of cytoplasm"/>
    <property type="evidence" value="ECO:0000314"/>
    <property type="project" value="UniProtKB"/>
</dbReference>
<dbReference type="GO" id="GO:0005886">
    <property type="term" value="C:plasma membrane"/>
    <property type="evidence" value="ECO:0000314"/>
    <property type="project" value="HPA"/>
</dbReference>
<dbReference type="GO" id="GO:0051015">
    <property type="term" value="F:actin filament binding"/>
    <property type="evidence" value="ECO:0000315"/>
    <property type="project" value="UniProtKB"/>
</dbReference>
<dbReference type="GO" id="GO:0005524">
    <property type="term" value="F:ATP binding"/>
    <property type="evidence" value="ECO:0000315"/>
    <property type="project" value="UniProtKB"/>
</dbReference>
<dbReference type="GO" id="GO:0045296">
    <property type="term" value="F:cadherin binding"/>
    <property type="evidence" value="ECO:0007005"/>
    <property type="project" value="BHF-UCL"/>
</dbReference>
<dbReference type="GO" id="GO:0005516">
    <property type="term" value="F:calmodulin binding"/>
    <property type="evidence" value="ECO:0007669"/>
    <property type="project" value="UniProtKB-KW"/>
</dbReference>
<dbReference type="GO" id="GO:0000146">
    <property type="term" value="F:microfilament motor activity"/>
    <property type="evidence" value="ECO:0000315"/>
    <property type="project" value="UniProtKB"/>
</dbReference>
<dbReference type="GO" id="GO:0005547">
    <property type="term" value="F:phosphatidylinositol-3,4,5-trisphosphate binding"/>
    <property type="evidence" value="ECO:0000250"/>
    <property type="project" value="UniProtKB"/>
</dbReference>
<dbReference type="GO" id="GO:0005546">
    <property type="term" value="F:phosphatidylinositol-4,5-bisphosphate binding"/>
    <property type="evidence" value="ECO:0000250"/>
    <property type="project" value="UniProtKB"/>
</dbReference>
<dbReference type="GO" id="GO:0051017">
    <property type="term" value="P:actin filament bundle assembly"/>
    <property type="evidence" value="ECO:0000250"/>
    <property type="project" value="UniProtKB"/>
</dbReference>
<dbReference type="GO" id="GO:0007015">
    <property type="term" value="P:actin filament organization"/>
    <property type="evidence" value="ECO:0000315"/>
    <property type="project" value="UniProtKB"/>
</dbReference>
<dbReference type="GO" id="GO:0030048">
    <property type="term" value="P:actin filament-based movement"/>
    <property type="evidence" value="ECO:0000250"/>
    <property type="project" value="UniProtKB"/>
</dbReference>
<dbReference type="GO" id="GO:0006897">
    <property type="term" value="P:endocytosis"/>
    <property type="evidence" value="ECO:0000318"/>
    <property type="project" value="GO_Central"/>
</dbReference>
<dbReference type="GO" id="GO:0006892">
    <property type="term" value="P:post-Golgi vesicle-mediated transport"/>
    <property type="evidence" value="ECO:0000315"/>
    <property type="project" value="UniProtKB"/>
</dbReference>
<dbReference type="CDD" id="cd01378">
    <property type="entry name" value="MYSc_Myo1"/>
    <property type="match status" value="1"/>
</dbReference>
<dbReference type="FunFam" id="1.20.5.4820:FF:000013">
    <property type="entry name" value="LOW QUALITY PROTEIN: unconventional myosin-Ib"/>
    <property type="match status" value="1"/>
</dbReference>
<dbReference type="FunFam" id="1.10.10.820:FF:000001">
    <property type="entry name" value="Myosin heavy chain"/>
    <property type="match status" value="1"/>
</dbReference>
<dbReference type="FunFam" id="1.20.5.190:FF:000007">
    <property type="entry name" value="Myosin-ib isoform 2"/>
    <property type="match status" value="1"/>
</dbReference>
<dbReference type="FunFam" id="3.40.850.10:FF:000101">
    <property type="entry name" value="Slow myosin heavy chain 2"/>
    <property type="match status" value="1"/>
</dbReference>
<dbReference type="FunFam" id="1.20.58.530:FF:000004">
    <property type="entry name" value="Unconventional myosin ID"/>
    <property type="match status" value="1"/>
</dbReference>
<dbReference type="FunFam" id="1.20.120.720:FF:000004">
    <property type="entry name" value="unconventional myosin-Ib isoform X1"/>
    <property type="match status" value="1"/>
</dbReference>
<dbReference type="FunFam" id="1.20.5.190:FF:000011">
    <property type="entry name" value="unconventional myosin-Ib isoform X1"/>
    <property type="match status" value="1"/>
</dbReference>
<dbReference type="Gene3D" id="1.10.10.820">
    <property type="match status" value="1"/>
</dbReference>
<dbReference type="Gene3D" id="1.20.5.190">
    <property type="match status" value="2"/>
</dbReference>
<dbReference type="Gene3D" id="1.20.58.530">
    <property type="match status" value="1"/>
</dbReference>
<dbReference type="Gene3D" id="6.20.240.20">
    <property type="match status" value="1"/>
</dbReference>
<dbReference type="Gene3D" id="3.40.850.10">
    <property type="entry name" value="Kinesin motor domain"/>
    <property type="match status" value="1"/>
</dbReference>
<dbReference type="Gene3D" id="1.20.120.720">
    <property type="entry name" value="Myosin VI head, motor domain, U50 subdomain"/>
    <property type="match status" value="1"/>
</dbReference>
<dbReference type="InterPro" id="IPR000048">
    <property type="entry name" value="IQ_motif_EF-hand-BS"/>
</dbReference>
<dbReference type="InterPro" id="IPR036961">
    <property type="entry name" value="Kinesin_motor_dom_sf"/>
</dbReference>
<dbReference type="InterPro" id="IPR001609">
    <property type="entry name" value="Myosin_head_motor_dom-like"/>
</dbReference>
<dbReference type="InterPro" id="IPR010926">
    <property type="entry name" value="Myosin_TH1"/>
</dbReference>
<dbReference type="InterPro" id="IPR036072">
    <property type="entry name" value="MYSc_Myo1"/>
</dbReference>
<dbReference type="InterPro" id="IPR027417">
    <property type="entry name" value="P-loop_NTPase"/>
</dbReference>
<dbReference type="PANTHER" id="PTHR13140">
    <property type="entry name" value="MYOSIN"/>
    <property type="match status" value="1"/>
</dbReference>
<dbReference type="PANTHER" id="PTHR13140:SF277">
    <property type="entry name" value="UNCONVENTIONAL MYOSIN-IB"/>
    <property type="match status" value="1"/>
</dbReference>
<dbReference type="Pfam" id="PF00612">
    <property type="entry name" value="IQ"/>
    <property type="match status" value="2"/>
</dbReference>
<dbReference type="Pfam" id="PF00063">
    <property type="entry name" value="Myosin_head"/>
    <property type="match status" value="1"/>
</dbReference>
<dbReference type="Pfam" id="PF06017">
    <property type="entry name" value="Myosin_TH1"/>
    <property type="match status" value="1"/>
</dbReference>
<dbReference type="PRINTS" id="PR00193">
    <property type="entry name" value="MYOSINHEAVY"/>
</dbReference>
<dbReference type="SMART" id="SM00015">
    <property type="entry name" value="IQ"/>
    <property type="match status" value="6"/>
</dbReference>
<dbReference type="SMART" id="SM00242">
    <property type="entry name" value="MYSc"/>
    <property type="match status" value="1"/>
</dbReference>
<dbReference type="SUPFAM" id="SSF52540">
    <property type="entry name" value="P-loop containing nucleoside triphosphate hydrolases"/>
    <property type="match status" value="2"/>
</dbReference>
<dbReference type="PROSITE" id="PS50096">
    <property type="entry name" value="IQ"/>
    <property type="match status" value="5"/>
</dbReference>
<dbReference type="PROSITE" id="PS51456">
    <property type="entry name" value="MYOSIN_MOTOR"/>
    <property type="match status" value="1"/>
</dbReference>
<dbReference type="PROSITE" id="PS51757">
    <property type="entry name" value="TH1"/>
    <property type="match status" value="1"/>
</dbReference>
<proteinExistence type="evidence at protein level"/>
<sequence>MAKMEVKTSLLDNMIGVGDMVLLEPLNEETFINNLKKRFDHSEIYTYIGSVVISVNPYRSLPIYSPEKVEEYRNRNFYELSPHIFALSDEAYRSLRDQDKDQCILITGESGAGKTEASKLVMSYVAAVCGKGAEVNQVKEQLLQSNPVLEAFGNAKTVRNDNSSRFGKYMDIEFDFKGDPLGGVISNYLLEKSRVVKQPRGERNFHVFYQLLSGASEELLNKLKLERDFSRYNYLSLDSAKVNGVDDAANFRTVRNAMQIVGFMDHEAESVLAVVAAVLKLGNIEFKPESRVNGLDESKIKDKNELKEICELTGIDQSVLERAFSFRTVEAKQEKVSTTLNVAQAYYARDALAKNLYSRLFSWLVNRINESIKAQTKVRKKVMGVLDIYGFEIFEDNSFEQFIINYCNEKLQQIFIELTLKEEQEEYIREDIEWTHIDYFNNAIICDLIENNTNGILAMLDEECLRPGTVTDETFLEKLNQVCATHQHFESRMSKCSRFLNDTSLPHSCFRIQHYAGKVLYQVEGFVDKNNDLLYRDLSQAMWKASHALIKSLFPEGNPAKINLKRPPTAGSQFKASVATLMKNLQTKNPNYIRCIKPNDKKAAHIFNEALVCHQIRYLGLLENVRVRRAGYAFRQAYEPCLERYKMLCKQTWPHWKGPARSGVEVLFNELEIPVEEYSFGRSKIFIRNPRTLFKLEDLRKQRLEDLATLIQKIYRGWKCRTHFLLMKKSQIVIAAWYRRYAQQKRYQQTKSSALVIQSYIRGWKARKILRELKHQKRCKEAVTTIAAYWHGTQARRELRRLKEEARNKHAIAVIWAYWLGSKARRELKRLKEEARRKHAVAVIWAYWLGLKVRREYRKFFRANAGKKIYEFTLQRIVQKYFLEMKNKMPSLSPIDKNWPSRPYLFLDSTHKELKRIFHLWRCKKYRDQFTDQQKLIYEEKLEASELFKDKKALYPSSVGQPFQGAYLEINKNPKYKKLKDAIEEKIIIAEVVNKINRANGKSTSRIFLLTNNNLLLADQKSGQIKSEVPLVDVTKVSMSSQNDGFFAVHLKEGSEAASKGDFLFSSDHLIEMATKLYRTTLSQTKQKLNIEISDEFLVQFRQDKVCVKFIQGNQKNGSVPTCKRKNNRLLEVAVP</sequence>
<reference key="1">
    <citation type="journal article" date="2004" name="Genome Res.">
        <title>The status, quality, and expansion of the NIH full-length cDNA project: the Mammalian Gene Collection (MGC).</title>
        <authorList>
            <consortium name="The MGC Project Team"/>
        </authorList>
    </citation>
    <scope>NUCLEOTIDE SEQUENCE [LARGE SCALE MRNA] (ISOFORM 1)</scope>
    <source>
        <tissue>Skin</tissue>
    </source>
</reference>
<reference key="2">
    <citation type="submission" date="1997-12" db="EMBL/GenBank/DDBJ databases">
        <title>A mutated non conventional class I myosin peptide elicits a dominant CTL response in a regressive human primary melanoma lesion.</title>
        <authorList>
            <person name="Zorn E."/>
            <person name="Hercend T."/>
        </authorList>
    </citation>
    <scope>NUCLEOTIDE SEQUENCE [MRNA] OF 644-1136 (ISOFORM 2)</scope>
    <scope>VARIANT LYS-969</scope>
</reference>
<reference key="3">
    <citation type="journal article" date="2011" name="BMC Syst. Biol.">
        <title>Initial characterization of the human central proteome.</title>
        <authorList>
            <person name="Burkard T.R."/>
            <person name="Planyavsky M."/>
            <person name="Kaupe I."/>
            <person name="Breitwieser F.P."/>
            <person name="Buerckstuemmer T."/>
            <person name="Bennett K.L."/>
            <person name="Superti-Furga G."/>
            <person name="Colinge J."/>
        </authorList>
    </citation>
    <scope>IDENTIFICATION BY MASS SPECTROMETRY [LARGE SCALE ANALYSIS]</scope>
</reference>
<reference key="4">
    <citation type="journal article" date="2014" name="J. Proteomics">
        <title>An enzyme assisted RP-RPLC approach for in-depth analysis of human liver phosphoproteome.</title>
        <authorList>
            <person name="Bian Y."/>
            <person name="Song C."/>
            <person name="Cheng K."/>
            <person name="Dong M."/>
            <person name="Wang F."/>
            <person name="Huang J."/>
            <person name="Sun D."/>
            <person name="Wang L."/>
            <person name="Ye M."/>
            <person name="Zou H."/>
        </authorList>
    </citation>
    <scope>PHOSPHORYLATION [LARGE SCALE ANALYSIS] AT SER-60</scope>
    <scope>IDENTIFICATION BY MASS SPECTROMETRY [LARGE SCALE ANALYSIS]</scope>
    <source>
        <tissue>Liver</tissue>
    </source>
</reference>
<reference key="5">
    <citation type="journal article" date="2014" name="Nat. Struct. Mol. Biol.">
        <title>Uncovering global SUMOylation signaling networks in a site-specific manner.</title>
        <authorList>
            <person name="Hendriks I.A."/>
            <person name="D'Souza R.C."/>
            <person name="Yang B."/>
            <person name="Verlaan-de Vries M."/>
            <person name="Mann M."/>
            <person name="Vertegaal A.C."/>
        </authorList>
    </citation>
    <scope>SUMOYLATION [LARGE SCALE ANALYSIS] AT LYS-287</scope>
    <scope>IDENTIFICATION BY MASS SPECTROMETRY [LARGE SCALE ANALYSIS]</scope>
</reference>
<reference key="6">
    <citation type="journal article" date="2014" name="Proc. Natl. Acad. Sci. U.S.A.">
        <title>Mapping of SUMO sites and analysis of SUMOylation changes induced by external stimuli.</title>
        <authorList>
            <person name="Impens F."/>
            <person name="Radoshevich L."/>
            <person name="Cossart P."/>
            <person name="Ribet D."/>
        </authorList>
    </citation>
    <scope>SUMOYLATION [LARGE SCALE ANALYSIS] AT LYS-287</scope>
    <scope>IDENTIFICATION BY MASS SPECTROMETRY [LARGE SCALE ANALYSIS]</scope>
</reference>
<reference key="7">
    <citation type="journal article" date="2015" name="Mol. Cell. Proteomics">
        <title>System-wide analysis of SUMOylation dynamics in response to replication stress reveals novel small ubiquitin-like modified target proteins and acceptor lysines relevant for genome stability.</title>
        <authorList>
            <person name="Xiao Z."/>
            <person name="Chang J.G."/>
            <person name="Hendriks I.A."/>
            <person name="Sigurdsson J.O."/>
            <person name="Olsen J.V."/>
            <person name="Vertegaal A.C."/>
        </authorList>
    </citation>
    <scope>SUMOYLATION [LARGE SCALE ANALYSIS] AT LYS-287</scope>
    <scope>IDENTIFICATION BY MASS SPECTROMETRY [LARGE SCALE ANALYSIS]</scope>
</reference>
<reference key="8">
    <citation type="journal article" date="2017" name="Nat. Struct. Mol. Biol.">
        <title>Site-specific mapping of the human SUMO proteome reveals co-modification with phosphorylation.</title>
        <authorList>
            <person name="Hendriks I.A."/>
            <person name="Lyon D."/>
            <person name="Young C."/>
            <person name="Jensen L.J."/>
            <person name="Vertegaal A.C."/>
            <person name="Nielsen M.L."/>
        </authorList>
    </citation>
    <scope>SUMOYLATION [LARGE SCALE ANALYSIS] AT LYS-287</scope>
    <scope>IDENTIFICATION BY MASS SPECTROMETRY [LARGE SCALE ANALYSIS]</scope>
</reference>
<reference key="9">
    <citation type="journal article" date="2006" name="Science">
        <title>The consensus coding sequences of human breast and colorectal cancers.</title>
        <authorList>
            <person name="Sjoeblom T."/>
            <person name="Jones S."/>
            <person name="Wood L.D."/>
            <person name="Parsons D.W."/>
            <person name="Lin J."/>
            <person name="Barber T.D."/>
            <person name="Mandelker D."/>
            <person name="Leary R.J."/>
            <person name="Ptak J."/>
            <person name="Silliman N."/>
            <person name="Szabo S."/>
            <person name="Buckhaults P."/>
            <person name="Farrell C."/>
            <person name="Meeh P."/>
            <person name="Markowitz S.D."/>
            <person name="Willis J."/>
            <person name="Dawson D."/>
            <person name="Willson J.K.V."/>
            <person name="Gazdar A.F."/>
            <person name="Hartigan J."/>
            <person name="Wu L."/>
            <person name="Liu C."/>
            <person name="Parmigiani G."/>
            <person name="Park B.H."/>
            <person name="Bachman K.E."/>
            <person name="Papadopoulos N."/>
            <person name="Vogelstein B."/>
            <person name="Kinzler K.W."/>
            <person name="Velculescu V.E."/>
        </authorList>
    </citation>
    <scope>VARIANTS [LARGE SCALE ANALYSIS] GLY-385 AND ILE-385</scope>
</reference>
<organism>
    <name type="scientific">Homo sapiens</name>
    <name type="common">Human</name>
    <dbReference type="NCBI Taxonomy" id="9606"/>
    <lineage>
        <taxon>Eukaryota</taxon>
        <taxon>Metazoa</taxon>
        <taxon>Chordata</taxon>
        <taxon>Craniata</taxon>
        <taxon>Vertebrata</taxon>
        <taxon>Euteleostomi</taxon>
        <taxon>Mammalia</taxon>
        <taxon>Eutheria</taxon>
        <taxon>Euarchontoglires</taxon>
        <taxon>Primates</taxon>
        <taxon>Haplorrhini</taxon>
        <taxon>Catarrhini</taxon>
        <taxon>Hominidae</taxon>
        <taxon>Homo</taxon>
    </lineage>
</organism>
<feature type="chain" id="PRO_0000123442" description="Unconventional myosin-Ib">
    <location>
        <begin position="1"/>
        <end position="1136"/>
    </location>
</feature>
<feature type="domain" description="Myosin motor" evidence="3">
    <location>
        <begin position="15"/>
        <end position="701"/>
    </location>
</feature>
<feature type="domain" description="IQ 1" evidence="2">
    <location>
        <begin position="704"/>
        <end position="733"/>
    </location>
</feature>
<feature type="domain" description="IQ 2" evidence="2">
    <location>
        <begin position="728"/>
        <end position="748"/>
    </location>
</feature>
<feature type="domain" description="IQ 3" evidence="2">
    <location>
        <begin position="750"/>
        <end position="779"/>
    </location>
</feature>
<feature type="domain" description="IQ 4" evidence="2">
    <location>
        <begin position="779"/>
        <end position="808"/>
    </location>
</feature>
<feature type="domain" description="IQ 5" evidence="2">
    <location>
        <begin position="808"/>
        <end position="837"/>
    </location>
</feature>
<feature type="domain" description="IQ 6" evidence="2">
    <location>
        <begin position="837"/>
        <end position="866"/>
    </location>
</feature>
<feature type="domain" description="TH1" evidence="4">
    <location>
        <begin position="952"/>
        <end position="1136"/>
    </location>
</feature>
<feature type="region of interest" description="Actin-binding" evidence="3">
    <location>
        <begin position="578"/>
        <end position="600"/>
    </location>
</feature>
<feature type="binding site" evidence="3">
    <location>
        <begin position="108"/>
        <end position="115"/>
    </location>
    <ligand>
        <name>ATP</name>
        <dbReference type="ChEBI" id="CHEBI:30616"/>
    </ligand>
</feature>
<feature type="modified residue" description="Phosphoserine" evidence="9">
    <location>
        <position position="60"/>
    </location>
</feature>
<feature type="cross-link" description="Glycyl lysine isopeptide (Lys-Gly) (interchain with G-Cter in SUMO1); alternate" evidence="10">
    <location>
        <position position="287"/>
    </location>
</feature>
<feature type="cross-link" description="Glycyl lysine isopeptide (Lys-Gly) (interchain with G-Cter in SUMO2); alternate" evidence="10 11 12 13">
    <location>
        <position position="287"/>
    </location>
</feature>
<feature type="splice variant" id="VSP_012759" description="In isoform 2." evidence="7">
    <location>
        <begin position="795"/>
        <end position="852"/>
    </location>
</feature>
<feature type="sequence variant" id="VAR_036007" description="In a colorectal cancer sample; somatic mutation." evidence="5">
    <original>V</original>
    <variation>G</variation>
    <location>
        <position position="385"/>
    </location>
</feature>
<feature type="sequence variant" id="VAR_036008" description="In a colorectal cancer sample; somatic mutation." evidence="5">
    <original>V</original>
    <variation>I</variation>
    <location>
        <position position="385"/>
    </location>
</feature>
<feature type="sequence variant" id="VAR_014113" description="In a melanoma patient." evidence="6">
    <original>E</original>
    <variation>K</variation>
    <location>
        <position position="969"/>
    </location>
</feature>